<feature type="chain" id="PRO_0000146766" description="Acetyl-CoA carboxylase 1">
    <location>
        <begin position="1"/>
        <end position="2346"/>
    </location>
</feature>
<feature type="domain" description="Biotin carboxylation" evidence="6">
    <location>
        <begin position="117"/>
        <end position="618"/>
    </location>
</feature>
<feature type="domain" description="ATP-grasp" evidence="5">
    <location>
        <begin position="275"/>
        <end position="466"/>
    </location>
</feature>
<feature type="domain" description="Biotinyl-binding" evidence="7">
    <location>
        <begin position="745"/>
        <end position="819"/>
    </location>
</feature>
<feature type="domain" description="CoA carboxyltransferase N-terminal" evidence="8">
    <location>
        <begin position="1576"/>
        <end position="1914"/>
    </location>
</feature>
<feature type="domain" description="CoA carboxyltransferase C-terminal" evidence="9">
    <location>
        <begin position="1918"/>
        <end position="2234"/>
    </location>
</feature>
<feature type="region of interest" description="Carboxyltransferase" evidence="10">
    <location>
        <begin position="1576"/>
        <end position="2234"/>
    </location>
</feature>
<feature type="active site" evidence="1">
    <location>
        <position position="441"/>
    </location>
</feature>
<feature type="binding site" evidence="5">
    <location>
        <begin position="315"/>
        <end position="320"/>
    </location>
    <ligand>
        <name>ATP</name>
        <dbReference type="ChEBI" id="CHEBI:30616"/>
    </ligand>
</feature>
<feature type="binding site" evidence="5 6">
    <location>
        <position position="424"/>
    </location>
    <ligand>
        <name>Mg(2+)</name>
        <dbReference type="ChEBI" id="CHEBI:18420"/>
        <label>1</label>
    </ligand>
</feature>
<feature type="binding site" evidence="5 6">
    <location>
        <position position="424"/>
    </location>
    <ligand>
        <name>Mn(2+)</name>
        <dbReference type="ChEBI" id="CHEBI:29035"/>
        <label>1</label>
    </ligand>
</feature>
<feature type="binding site" evidence="5 6">
    <location>
        <position position="437"/>
    </location>
    <ligand>
        <name>Mg(2+)</name>
        <dbReference type="ChEBI" id="CHEBI:18420"/>
        <label>1</label>
    </ligand>
</feature>
<feature type="binding site" evidence="5 6">
    <location>
        <position position="437"/>
    </location>
    <ligand>
        <name>Mg(2+)</name>
        <dbReference type="ChEBI" id="CHEBI:18420"/>
        <label>2</label>
    </ligand>
</feature>
<feature type="binding site" evidence="5 6">
    <location>
        <position position="437"/>
    </location>
    <ligand>
        <name>Mn(2+)</name>
        <dbReference type="ChEBI" id="CHEBI:29035"/>
        <label>1</label>
    </ligand>
</feature>
<feature type="binding site" evidence="5 6">
    <location>
        <position position="437"/>
    </location>
    <ligand>
        <name>Mn(2+)</name>
        <dbReference type="ChEBI" id="CHEBI:29035"/>
        <label>2</label>
    </ligand>
</feature>
<feature type="binding site" evidence="5 6">
    <location>
        <position position="439"/>
    </location>
    <ligand>
        <name>Mg(2+)</name>
        <dbReference type="ChEBI" id="CHEBI:18420"/>
        <label>2</label>
    </ligand>
</feature>
<feature type="binding site" evidence="5 6">
    <location>
        <position position="439"/>
    </location>
    <ligand>
        <name>Mn(2+)</name>
        <dbReference type="ChEBI" id="CHEBI:29035"/>
        <label>2</label>
    </ligand>
</feature>
<feature type="binding site" evidence="1">
    <location>
        <position position="1823"/>
    </location>
    <ligand>
        <name>CoA</name>
        <dbReference type="ChEBI" id="CHEBI:57287"/>
    </ligand>
</feature>
<feature type="binding site" evidence="1">
    <location>
        <position position="2127"/>
    </location>
    <ligand>
        <name>CoA</name>
        <dbReference type="ChEBI" id="CHEBI:57287"/>
    </ligand>
</feature>
<feature type="binding site" evidence="1">
    <location>
        <position position="2129"/>
    </location>
    <ligand>
        <name>CoA</name>
        <dbReference type="ChEBI" id="CHEBI:57287"/>
    </ligand>
</feature>
<feature type="modified residue" description="N-acetylmethionine" evidence="3">
    <location>
        <position position="1"/>
    </location>
</feature>
<feature type="modified residue" description="Phosphoserine" evidence="3">
    <location>
        <position position="5"/>
    </location>
</feature>
<feature type="modified residue" description="Phosphoserine" evidence="3">
    <location>
        <position position="23"/>
    </location>
</feature>
<feature type="modified residue" description="Phosphoserine" evidence="3">
    <location>
        <position position="25"/>
    </location>
</feature>
<feature type="modified residue" description="Phosphoserine" evidence="3">
    <location>
        <position position="29"/>
    </location>
</feature>
<feature type="modified residue" description="Phosphoserine" evidence="2">
    <location>
        <position position="34"/>
    </location>
</feature>
<feature type="modified residue" description="Phosphoserine" evidence="3">
    <location>
        <position position="48"/>
    </location>
</feature>
<feature type="modified residue" description="Phosphoserine" evidence="2">
    <location>
        <position position="50"/>
    </location>
</feature>
<feature type="modified residue" description="Phosphoserine" evidence="3">
    <location>
        <position position="53"/>
    </location>
</feature>
<feature type="modified residue" description="Phosphothreonine" evidence="4">
    <location>
        <position position="58"/>
    </location>
</feature>
<feature type="modified residue" description="Phosphoserine" evidence="2">
    <location>
        <position position="78"/>
    </location>
</feature>
<feature type="modified residue" description="Phosphoserine; by AMPK" evidence="4">
    <location>
        <position position="80"/>
    </location>
</feature>
<feature type="modified residue" description="Phosphothreonine" evidence="3">
    <location>
        <position position="610"/>
    </location>
</feature>
<feature type="modified residue" description="N6-biotinyllysine" evidence="2 7">
    <location>
        <position position="786"/>
    </location>
</feature>
<feature type="modified residue" description="Phosphoserine" evidence="3">
    <location>
        <position position="835"/>
    </location>
</feature>
<feature type="modified residue" description="Phosphoserine" evidence="2">
    <location>
        <position position="1201"/>
    </location>
</feature>
<feature type="modified residue" description="Phosphoserine" evidence="2">
    <location>
        <position position="1216"/>
    </location>
</feature>
<feature type="modified residue" description="Phosphoserine" evidence="4">
    <location>
        <position position="1218"/>
    </location>
</feature>
<feature type="modified residue" description="Phosphothreonine" evidence="4">
    <location>
        <position position="1227"/>
    </location>
</feature>
<feature type="modified residue" description="Phosphoserine" evidence="4">
    <location>
        <position position="1259"/>
    </location>
</feature>
<feature type="modified residue" description="Phosphoserine" evidence="3">
    <location>
        <position position="1263"/>
    </location>
</feature>
<feature type="modified residue" description="Phosphoserine" evidence="3">
    <location>
        <position position="1273"/>
    </location>
</feature>
<feature type="modified residue" description="N6-acetyllysine" evidence="3">
    <location>
        <position position="1334"/>
    </location>
</feature>
<feature type="modified residue" description="Phosphothreonine" evidence="3">
    <location>
        <position position="2153"/>
    </location>
</feature>
<feature type="splice variant" id="VSP_026102" description="In isoform 2." evidence="13">
    <original>MGEPSSLAKPLELNQHSRFIIGSVSEDNSEDEISNLVKLDLLEEKEGSLSPASVSSDTLSDLGISSLQDGLALHM</original>
    <variation>MEGSAEESKEMRYYMLQ</variation>
    <location>
        <begin position="1"/>
        <end position="75"/>
    </location>
</feature>
<feature type="splice variant" id="VSP_026103" description="In isoform 3." evidence="12">
    <original>M</original>
    <variation>MWWSTLMSILRASSFWKWISAQTIRIIRALRARFEGTM</variation>
    <location>
        <position position="1"/>
    </location>
</feature>
<accession>Q28559</accession>
<accession>O62847</accession>
<accession>Q6KEV5</accession>
<keyword id="KW-0007">Acetylation</keyword>
<keyword id="KW-0021">Allosteric enzyme</keyword>
<keyword id="KW-0877">Alternative promoter usage</keyword>
<keyword id="KW-0067">ATP-binding</keyword>
<keyword id="KW-0092">Biotin</keyword>
<keyword id="KW-0963">Cytoplasm</keyword>
<keyword id="KW-0275">Fatty acid biosynthesis</keyword>
<keyword id="KW-0276">Fatty acid metabolism</keyword>
<keyword id="KW-0436">Ligase</keyword>
<keyword id="KW-0444">Lipid biosynthesis</keyword>
<keyword id="KW-0443">Lipid metabolism</keyword>
<keyword id="KW-0460">Magnesium</keyword>
<keyword id="KW-0464">Manganese</keyword>
<keyword id="KW-0479">Metal-binding</keyword>
<keyword id="KW-0511">Multifunctional enzyme</keyword>
<keyword id="KW-0547">Nucleotide-binding</keyword>
<keyword id="KW-0597">Phosphoprotein</keyword>
<keyword id="KW-1185">Reference proteome</keyword>
<evidence type="ECO:0000250" key="1"/>
<evidence type="ECO:0000250" key="2">
    <source>
        <dbReference type="UniProtKB" id="P11497"/>
    </source>
</evidence>
<evidence type="ECO:0000250" key="3">
    <source>
        <dbReference type="UniProtKB" id="Q13085"/>
    </source>
</evidence>
<evidence type="ECO:0000250" key="4">
    <source>
        <dbReference type="UniProtKB" id="Q5SWU9"/>
    </source>
</evidence>
<evidence type="ECO:0000255" key="5">
    <source>
        <dbReference type="PROSITE-ProRule" id="PRU00409"/>
    </source>
</evidence>
<evidence type="ECO:0000255" key="6">
    <source>
        <dbReference type="PROSITE-ProRule" id="PRU00969"/>
    </source>
</evidence>
<evidence type="ECO:0000255" key="7">
    <source>
        <dbReference type="PROSITE-ProRule" id="PRU01066"/>
    </source>
</evidence>
<evidence type="ECO:0000255" key="8">
    <source>
        <dbReference type="PROSITE-ProRule" id="PRU01136"/>
    </source>
</evidence>
<evidence type="ECO:0000255" key="9">
    <source>
        <dbReference type="PROSITE-ProRule" id="PRU01137"/>
    </source>
</evidence>
<evidence type="ECO:0000255" key="10">
    <source>
        <dbReference type="PROSITE-ProRule" id="PRU01138"/>
    </source>
</evidence>
<evidence type="ECO:0000269" key="11">
    <source>
    </source>
</evidence>
<evidence type="ECO:0000303" key="12">
    <source>
    </source>
</evidence>
<evidence type="ECO:0000303" key="13">
    <source>
    </source>
</evidence>
<organism>
    <name type="scientific">Ovis aries</name>
    <name type="common">Sheep</name>
    <dbReference type="NCBI Taxonomy" id="9940"/>
    <lineage>
        <taxon>Eukaryota</taxon>
        <taxon>Metazoa</taxon>
        <taxon>Chordata</taxon>
        <taxon>Craniata</taxon>
        <taxon>Vertebrata</taxon>
        <taxon>Euteleostomi</taxon>
        <taxon>Mammalia</taxon>
        <taxon>Eutheria</taxon>
        <taxon>Laurasiatheria</taxon>
        <taxon>Artiodactyla</taxon>
        <taxon>Ruminantia</taxon>
        <taxon>Pecora</taxon>
        <taxon>Bovidae</taxon>
        <taxon>Caprinae</taxon>
        <taxon>Ovis</taxon>
    </lineage>
</organism>
<gene>
    <name evidence="3" type="primary">ACACA</name>
    <name type="synonym">ACAC</name>
</gene>
<proteinExistence type="evidence at transcript level"/>
<protein>
    <recommendedName>
        <fullName evidence="3">Acetyl-CoA carboxylase 1</fullName>
        <shortName>ACC1</shortName>
        <ecNumber evidence="3">6.4.1.2</ecNumber>
    </recommendedName>
    <alternativeName>
        <fullName>ACC-alpha</fullName>
    </alternativeName>
</protein>
<name>ACACA_SHEEP</name>
<comment type="function">
    <text evidence="3">Cytosolic enzyme that catalyzes the carboxylation of acetyl-CoA to malonyl-CoA, the first and rate-limiting step of de novo fatty acid biosynthesis. This is a 2 steps reaction starting with the ATP-dependent carboxylation of the biotin carried by the biotin carboxyl carrier (BCC) domain followed by the transfer of the carboxyl group from carboxylated biotin to acetyl-CoA.</text>
</comment>
<comment type="catalytic activity">
    <reaction evidence="3">
        <text>hydrogencarbonate + acetyl-CoA + ATP = malonyl-CoA + ADP + phosphate + H(+)</text>
        <dbReference type="Rhea" id="RHEA:11308"/>
        <dbReference type="ChEBI" id="CHEBI:15378"/>
        <dbReference type="ChEBI" id="CHEBI:17544"/>
        <dbReference type="ChEBI" id="CHEBI:30616"/>
        <dbReference type="ChEBI" id="CHEBI:43474"/>
        <dbReference type="ChEBI" id="CHEBI:57288"/>
        <dbReference type="ChEBI" id="CHEBI:57384"/>
        <dbReference type="ChEBI" id="CHEBI:456216"/>
        <dbReference type="EC" id="6.4.1.2"/>
    </reaction>
    <physiologicalReaction direction="left-to-right" evidence="3">
        <dbReference type="Rhea" id="RHEA:11309"/>
    </physiologicalReaction>
</comment>
<comment type="cofactor">
    <cofactor evidence="5 6">
        <name>Mg(2+)</name>
        <dbReference type="ChEBI" id="CHEBI:18420"/>
    </cofactor>
    <cofactor evidence="5 6">
        <name>Mn(2+)</name>
        <dbReference type="ChEBI" id="CHEBI:29035"/>
    </cofactor>
    <text evidence="5 6">Binds 2 magnesium or manganese ions per subunit.</text>
</comment>
<comment type="cofactor">
    <cofactor evidence="3 7">
        <name>biotin</name>
        <dbReference type="ChEBI" id="CHEBI:57586"/>
    </cofactor>
</comment>
<comment type="activity regulation">
    <text evidence="3">Inhibited by phosphorylation (By similarity). Citrate promotes oligomerization of the protein into filaments that correspond to the most active form of the carboxylase (By similarity).</text>
</comment>
<comment type="pathway">
    <text evidence="3">Lipid metabolism; malonyl-CoA biosynthesis; malonyl-CoA from acetyl-CoA: step 1/1.</text>
</comment>
<comment type="subunit">
    <text evidence="3">Monomer, homodimer, and homotetramer. Can form filamentous polymers. Interacts in its inactive phosphorylated form with the BRCT domains of BRCA1 which prevents ACACA dephosphorylation and inhibits lipid synthesis. Interacts with MID1IP1; interaction with MID1IP1 promotes oligomerization and increases its activity.</text>
</comment>
<comment type="subcellular location">
    <subcellularLocation>
        <location evidence="4">Cytoplasm</location>
        <location evidence="4">Cytosol</location>
    </subcellularLocation>
</comment>
<comment type="alternative products">
    <event type="alternative promoter"/>
    <isoform>
        <id>Q28559-1</id>
        <name>1</name>
        <sequence type="displayed"/>
    </isoform>
    <isoform>
        <id>Q28559-2</id>
        <name>2</name>
        <name>E5A</name>
        <sequence type="described" ref="VSP_026102"/>
    </isoform>
    <isoform>
        <id>Q28559-3</id>
        <name>3</name>
        <sequence type="described" ref="VSP_026103"/>
    </isoform>
</comment>
<comment type="tissue specificity">
    <molecule>Isoform 2</molecule>
    <text evidence="11">Expressed at high levels in mammary gland.</text>
</comment>
<comment type="induction">
    <molecule>Isoform 2</molecule>
    <text evidence="11">Induced in mammary gland during lactation.</text>
</comment>
<comment type="domain">
    <text evidence="3">Consists of an N-terminal biotin carboxylation/carboxylase (BC) domain that catalyzes the ATP-dependent transient carboxylation of the biotin covalently attached to the central biotinyl-binding/biotin carboxyl carrier (BCC) domain. The C-terminal carboxyl transferase (CT) domain catalyzes the transfer of the carboxyl group from carboxylated biotin to acetyl-CoA to produce malonyl-CoA.</text>
</comment>
<comment type="PTM">
    <text evidence="3">Phosphorylation on Ser-1263 is required for interaction with BRCA1.</text>
</comment>
<comment type="PTM">
    <text evidence="2">Phosphorylation at Ser-80 by AMPK inactivates enzyme activity.</text>
</comment>
<comment type="PTM">
    <text evidence="3">The biotin cofactor is covalently attached to the central biotinyl-binding domain and is required for the catalytic activity.</text>
</comment>
<sequence>MGEPSSLAKPLELNQHSRFIIGSVSEDNSEDEISNLVKLDLLEEKEGSLSPASVSSDTLSDLGISSLQDGLALHMRSSMSGLHLVKQGRDRKKIDSQRDFTVASPAEFVTRFGGNKVIEKVLIANNGIAAVKCMRSIRRWSYEMFRNERAIRFVVMVTPEDLKANAEYIKMADHYVPVPGGPNNNNYANVELILDIARRIPVQAVWAGWGHASENPKLPELLLKNGIAFMGPPSQAMWALGDKIASSIVAQTAGIPTLPWSGSGLCVDWHENDFSKRILNVPQELYEKGYVKDVDDGLKAAEEVGYPVMIKASEGGGGKGIRKVNNADDFPNLFRQVQAEVPGSPIFVMRLAKQSRHLEVQILADQYGNAISLFGRDCSVQRRHQKIIEEAPAAIATPAVFEHMEQCAVKLARMVGYVSAGTVEYLYSQDGSFYFLELNPRLQVEHPCTEMVADVNLPAAQLQIAMGIPLYRIKDIRMMYGVSPWGDAPIDFENSAHVPCPRGHVIAARITSENPDEGFKPSSGTVQELNFRSNKNVWGYFSVAAAGGLHEFADSQFGHCFSWGENREEAISNMVVALKELSIRGDFRTTVEYLIKLLETESFQLNRIDTGWLDRLIAEKVQAERPDTMLGVVCGALHVADVSLRNSISNFLHSLERGQVLSAHTLLNTVDVELIYEGEKIVLKVTRQSPNSYVVIMNGSCVEVDVHRLSDGGLLLSYDGSSYTTYMKEEVDRYRITIGNKTCVFEKENDPSVLRSPSAGKLIQYIVEDGGHVFAGQCYAEIEVMKMVMTLTAAESGCIHYVKRPGAALDPGCVIAKMQLDNPSKVQQAELHTGSLPRIQSTALRGEKLHRVFHYVLDNLVNVMNGYCLPDPFFSSRVKDWVEGLMKTLRDPSLPLLELQDIMTSVSGRIPPNVEKSIKKEMAQYASNITSVLCQFPSQQIANILDSHAATLNRKSEREVFFMNTQSIVQLVQRYRSGIRGHMKAVVMDLLRQYLRVETQFQNGHYDKCVFALREENKSDMNTVLNYIFSHAQVTKKNLLVTMLIDQLCGRDPTLTDELLNILTELTQLSKTTNAKVALRARQVLIASHLPSYELRHNQVESIFLSAIDMYGHQFCIENLQKLILSETSIFDVLPNFFYHSNQVVRMAALEVYVRRAYIAYELNSVQHRQLKDNTCVVEFQFMLPTSHPNRGNIPTLNRMSFSSNLNHYGMTHVASVSDVLLDNAFTPPCQRMGGMVSFRTFEDFVRIFDEVMGCFCDSPPQSPTFPEAGHTSLYDEDKVPRDEPIHILNVAIKTDCDIEDDSLAAMFREFTQQNKATLVEHGIRRLTFLVAQKDFRKQVNYEVDQRFHREFPKFFTFRARDKFEEDRIYRHLEPALAFQLELNRMRNFDLTAIPCANHKMHLYLGAAKVEVGTEVTDYRFFVRAIIRHSDLVTKEASFEYLQNEGERLLLEAMDELEVAFNNTNVRTDCNHIFLNFVPTVIMDPSKIEESVRSMVMRYGSRLWKLRVLQAELKINIRLTPTGKAIPIRLFLTNESGYYLDISLYKEVTDSRTAQIMFQAYGDKQGPLHGMLINTPYVTKDLLQSKRFQAQSLGTTYIYDIPEMFRQSLIKLWESMSSQAFLPPPPLPSDILTYTELVLDDQGQLVHMNRLPGGNEIGMVAWKMTLKSPEYPDGRDIIVIGNDITYRIGSFGPQEDLLFLRASELARAEGIPRIYVAANSGARIGLAEEIRHMFHVAWVDPEDPYKGYKYLYLTPQDYKRVSALNSVHCEHVEDEGESRYKITDIIGKEEGLGAENLRGSGMIAGESSLAYDEIITISLVTCRAIGIGAYLVRLGQRTIQVENSHLILTGAGALNKVLGREVYTSNNQLGGIQIMHNNGVTHSTVCDDFEGVFTVLHWLSYMPKSVYSSVPLLNSKDPIDRVIEFVPTKAPYDPRWMLAGRPHPTQKGQWLSGFFDYGSFSEIMQPWAQTVVVGRARLGGIPVGVVAVETRTVELSIPADPANLDSEAKIIQQAGQVWFPDSAFKTYQAIKDFNREGLPLMVFANWRGFSGGMKDMYDQVLKFGAYIVDGLRECSQPVMVYIPPQAELRGGSWVVIDPTINPRHMEMYADRESRGSVLEPEGTVEIKFRRKDLVKTMRRVDPVYIHLAERLGTPELSARERKELESKLKEREEFLLPIYHQVAVQFADLHDTPGRMQEKGVINDILDWKTSRTFFYWRLRRLLLEDLVKKKIHNANPELTDGQIQAMLRRWFVEVEGTVKAYVWDNNKDLVEWLEKQLTEEDGVRSVIEENIKYISRDYVLKQIRSLVQANPEVAMDSIVHMTQHISPTQRAEVVRILSTMDSPST</sequence>
<reference key="1">
    <citation type="journal article" date="1995" name="Gene">
        <title>Cloning and characterisation of multiple acetyl-CoA carboxylase transcripts in ovine adipose tissue.</title>
        <authorList>
            <person name="Barber M.C."/>
            <person name="Travers M.T."/>
        </authorList>
    </citation>
    <scope>NUCLEOTIDE SEQUENCE [MRNA] (ISOFORM 1)</scope>
    <source>
        <strain>Finn-Dorset</strain>
        <tissue>Adipose tissue</tissue>
    </source>
</reference>
<reference key="2">
    <citation type="journal article" date="1998" name="Biochem. J.">
        <title>Elucidation of a promoter activity that directs the expression of acetyl-CoA carboxylase alpha with an alternative N-terminus in a tissue-restricted fashion.</title>
        <authorList>
            <person name="Barber M.C."/>
            <person name="Travers M.T."/>
        </authorList>
    </citation>
    <scope>NUCLEOTIDE SEQUENCE [MRNA] OF 1-144 (ISOFORM 2)</scope>
    <scope>TISSUE SPECIFICITY</scope>
    <scope>INDUCTION BY LACTATION</scope>
    <source>
        <strain>Finn-Dorset</strain>
        <tissue>Mammary gland</tissue>
    </source>
</reference>
<reference key="3">
    <citation type="journal article" date="2005" name="Genomics">
        <title>Asymmetric expression of transcripts derived from the shared promoter between the divergently oriented ACACA and TADA2L genes.</title>
        <authorList>
            <person name="Travers M.T."/>
            <person name="Cambot M."/>
            <person name="Kennedy H.T."/>
            <person name="Lenoir G.M."/>
            <person name="Barber M.C."/>
            <person name="Joulin V."/>
        </authorList>
    </citation>
    <scope>NUCLEOTIDE SEQUENCE [MRNA] OF 1-93 (ISOFORM 3)</scope>
    <source>
        <tissue>Brain</tissue>
    </source>
</reference>
<dbReference type="EC" id="6.4.1.2" evidence="3"/>
<dbReference type="EMBL" id="X80045">
    <property type="protein sequence ID" value="CAA56352.1"/>
    <property type="molecule type" value="mRNA"/>
</dbReference>
<dbReference type="EMBL" id="AJ001056">
    <property type="protein sequence ID" value="CAA04506.1"/>
    <property type="molecule type" value="mRNA"/>
</dbReference>
<dbReference type="EMBL" id="AJ564445">
    <property type="protein sequence ID" value="CAD92090.1"/>
    <property type="molecule type" value="mRNA"/>
</dbReference>
<dbReference type="RefSeq" id="NP_001009256.1">
    <molecule id="Q28559-1"/>
    <property type="nucleotide sequence ID" value="NM_001009256.1"/>
</dbReference>
<dbReference type="SMR" id="Q28559"/>
<dbReference type="STRING" id="9940.ENSOARP00000000876"/>
<dbReference type="PaxDb" id="9940-ENSOARP00000000876"/>
<dbReference type="GeneID" id="443186"/>
<dbReference type="KEGG" id="oas:443186"/>
<dbReference type="CTD" id="31"/>
<dbReference type="eggNOG" id="KOG0368">
    <property type="taxonomic scope" value="Eukaryota"/>
</dbReference>
<dbReference type="OrthoDB" id="14612at2759"/>
<dbReference type="UniPathway" id="UPA00655">
    <property type="reaction ID" value="UER00711"/>
</dbReference>
<dbReference type="Proteomes" id="UP000002356">
    <property type="component" value="Unplaced"/>
</dbReference>
<dbReference type="GO" id="GO:0005829">
    <property type="term" value="C:cytosol"/>
    <property type="evidence" value="ECO:0000250"/>
    <property type="project" value="UniProtKB"/>
</dbReference>
<dbReference type="GO" id="GO:0005739">
    <property type="term" value="C:mitochondrion"/>
    <property type="evidence" value="ECO:0007669"/>
    <property type="project" value="TreeGrafter"/>
</dbReference>
<dbReference type="GO" id="GO:0003989">
    <property type="term" value="F:acetyl-CoA carboxylase activity"/>
    <property type="evidence" value="ECO:0000250"/>
    <property type="project" value="UniProtKB"/>
</dbReference>
<dbReference type="GO" id="GO:0005524">
    <property type="term" value="F:ATP binding"/>
    <property type="evidence" value="ECO:0007669"/>
    <property type="project" value="UniProtKB-KW"/>
</dbReference>
<dbReference type="GO" id="GO:0046872">
    <property type="term" value="F:metal ion binding"/>
    <property type="evidence" value="ECO:0007669"/>
    <property type="project" value="UniProtKB-KW"/>
</dbReference>
<dbReference type="GO" id="GO:0006084">
    <property type="term" value="P:acetyl-CoA metabolic process"/>
    <property type="evidence" value="ECO:0000250"/>
    <property type="project" value="UniProtKB"/>
</dbReference>
<dbReference type="GO" id="GO:0006633">
    <property type="term" value="P:fatty acid biosynthetic process"/>
    <property type="evidence" value="ECO:0000250"/>
    <property type="project" value="UniProtKB"/>
</dbReference>
<dbReference type="GO" id="GO:2001295">
    <property type="term" value="P:malonyl-CoA biosynthetic process"/>
    <property type="evidence" value="ECO:0007669"/>
    <property type="project" value="UniProtKB-UniPathway"/>
</dbReference>
<dbReference type="GO" id="GO:0051289">
    <property type="term" value="P:protein homotetramerization"/>
    <property type="evidence" value="ECO:0000250"/>
    <property type="project" value="UniProtKB"/>
</dbReference>
<dbReference type="CDD" id="cd06850">
    <property type="entry name" value="biotinyl_domain"/>
    <property type="match status" value="1"/>
</dbReference>
<dbReference type="FunFam" id="2.40.460.10:FF:000001">
    <property type="entry name" value="Acetyl-CoA carboxylase 1"/>
    <property type="match status" value="1"/>
</dbReference>
<dbReference type="FunFam" id="2.40.50.100:FF:000005">
    <property type="entry name" value="Acetyl-CoA carboxylase 1"/>
    <property type="match status" value="1"/>
</dbReference>
<dbReference type="FunFam" id="3.30.470.20:FF:000005">
    <property type="entry name" value="Acetyl-CoA carboxylase 1"/>
    <property type="match status" value="1"/>
</dbReference>
<dbReference type="FunFam" id="3.90.1770.10:FF:000001">
    <property type="entry name" value="acetyl-CoA carboxylase 1"/>
    <property type="match status" value="1"/>
</dbReference>
<dbReference type="FunFam" id="3.30.1490.20:FF:000003">
    <property type="entry name" value="acetyl-CoA carboxylase isoform X1"/>
    <property type="match status" value="1"/>
</dbReference>
<dbReference type="FunFam" id="3.40.50.20:FF:000005">
    <property type="entry name" value="acetyl-CoA carboxylase isoform X2"/>
    <property type="match status" value="1"/>
</dbReference>
<dbReference type="FunFam" id="3.90.226.10:FF:000010">
    <property type="entry name" value="acetyl-CoA carboxylase isoform X2"/>
    <property type="match status" value="1"/>
</dbReference>
<dbReference type="Gene3D" id="2.40.50.100">
    <property type="match status" value="1"/>
</dbReference>
<dbReference type="Gene3D" id="3.40.50.20">
    <property type="match status" value="1"/>
</dbReference>
<dbReference type="Gene3D" id="3.90.226.10">
    <property type="entry name" value="2-enoyl-CoA Hydratase, Chain A, domain 1"/>
    <property type="match status" value="2"/>
</dbReference>
<dbReference type="Gene3D" id="3.30.1490.20">
    <property type="entry name" value="ATP-grasp fold, A domain"/>
    <property type="match status" value="1"/>
</dbReference>
<dbReference type="Gene3D" id="3.30.470.20">
    <property type="entry name" value="ATP-grasp fold, B domain"/>
    <property type="match status" value="1"/>
</dbReference>
<dbReference type="Gene3D" id="2.40.460.10">
    <property type="entry name" value="Biotin dependent carboxylase carboxyltransferase"/>
    <property type="match status" value="1"/>
</dbReference>
<dbReference type="Gene3D" id="3.90.1770.10">
    <property type="entry name" value="PreATP-grasp domain"/>
    <property type="match status" value="1"/>
</dbReference>
<dbReference type="InterPro" id="IPR049076">
    <property type="entry name" value="ACCA"/>
</dbReference>
<dbReference type="InterPro" id="IPR049074">
    <property type="entry name" value="ACCA_BT"/>
</dbReference>
<dbReference type="InterPro" id="IPR034733">
    <property type="entry name" value="AcCoA_carboxyl_beta"/>
</dbReference>
<dbReference type="InterPro" id="IPR013537">
    <property type="entry name" value="AcCoA_COase_cen"/>
</dbReference>
<dbReference type="InterPro" id="IPR011761">
    <property type="entry name" value="ATP-grasp"/>
</dbReference>
<dbReference type="InterPro" id="IPR013815">
    <property type="entry name" value="ATP_grasp_subdomain_1"/>
</dbReference>
<dbReference type="InterPro" id="IPR005481">
    <property type="entry name" value="BC-like_N"/>
</dbReference>
<dbReference type="InterPro" id="IPR001882">
    <property type="entry name" value="Biotin_BS"/>
</dbReference>
<dbReference type="InterPro" id="IPR011764">
    <property type="entry name" value="Biotin_carboxylation_dom"/>
</dbReference>
<dbReference type="InterPro" id="IPR005482">
    <property type="entry name" value="Biotin_COase_C"/>
</dbReference>
<dbReference type="InterPro" id="IPR000089">
    <property type="entry name" value="Biotin_lipoyl"/>
</dbReference>
<dbReference type="InterPro" id="IPR005479">
    <property type="entry name" value="CbamoylP_synth_lsu-like_ATP-bd"/>
</dbReference>
<dbReference type="InterPro" id="IPR029045">
    <property type="entry name" value="ClpP/crotonase-like_dom_sf"/>
</dbReference>
<dbReference type="InterPro" id="IPR011763">
    <property type="entry name" value="COA_CT_C"/>
</dbReference>
<dbReference type="InterPro" id="IPR011762">
    <property type="entry name" value="COA_CT_N"/>
</dbReference>
<dbReference type="InterPro" id="IPR016185">
    <property type="entry name" value="PreATP-grasp_dom_sf"/>
</dbReference>
<dbReference type="InterPro" id="IPR011054">
    <property type="entry name" value="Rudment_hybrid_motif"/>
</dbReference>
<dbReference type="InterPro" id="IPR011053">
    <property type="entry name" value="Single_hybrid_motif"/>
</dbReference>
<dbReference type="PANTHER" id="PTHR45728:SF5">
    <property type="entry name" value="ACETYL-COA CARBOXYLASE 1"/>
    <property type="match status" value="1"/>
</dbReference>
<dbReference type="PANTHER" id="PTHR45728">
    <property type="entry name" value="ACETYL-COA CARBOXYLASE, ISOFORM A"/>
    <property type="match status" value="1"/>
</dbReference>
<dbReference type="Pfam" id="PF08326">
    <property type="entry name" value="ACC_central"/>
    <property type="match status" value="1"/>
</dbReference>
<dbReference type="Pfam" id="PF21385">
    <property type="entry name" value="ACCA_BT"/>
    <property type="match status" value="1"/>
</dbReference>
<dbReference type="Pfam" id="PF02785">
    <property type="entry name" value="Biotin_carb_C"/>
    <property type="match status" value="1"/>
</dbReference>
<dbReference type="Pfam" id="PF00289">
    <property type="entry name" value="Biotin_carb_N"/>
    <property type="match status" value="1"/>
</dbReference>
<dbReference type="Pfam" id="PF00364">
    <property type="entry name" value="Biotin_lipoyl"/>
    <property type="match status" value="1"/>
</dbReference>
<dbReference type="Pfam" id="PF01039">
    <property type="entry name" value="Carboxyl_trans"/>
    <property type="match status" value="1"/>
</dbReference>
<dbReference type="Pfam" id="PF02786">
    <property type="entry name" value="CPSase_L_D2"/>
    <property type="match status" value="1"/>
</dbReference>
<dbReference type="SMART" id="SM00878">
    <property type="entry name" value="Biotin_carb_C"/>
    <property type="match status" value="1"/>
</dbReference>
<dbReference type="SUPFAM" id="SSF52096">
    <property type="entry name" value="ClpP/crotonase"/>
    <property type="match status" value="2"/>
</dbReference>
<dbReference type="SUPFAM" id="SSF56059">
    <property type="entry name" value="Glutathione synthetase ATP-binding domain-like"/>
    <property type="match status" value="1"/>
</dbReference>
<dbReference type="SUPFAM" id="SSF52440">
    <property type="entry name" value="PreATP-grasp domain"/>
    <property type="match status" value="1"/>
</dbReference>
<dbReference type="SUPFAM" id="SSF51246">
    <property type="entry name" value="Rudiment single hybrid motif"/>
    <property type="match status" value="1"/>
</dbReference>
<dbReference type="SUPFAM" id="SSF51230">
    <property type="entry name" value="Single hybrid motif"/>
    <property type="match status" value="1"/>
</dbReference>
<dbReference type="PROSITE" id="PS50975">
    <property type="entry name" value="ATP_GRASP"/>
    <property type="match status" value="1"/>
</dbReference>
<dbReference type="PROSITE" id="PS50979">
    <property type="entry name" value="BC"/>
    <property type="match status" value="1"/>
</dbReference>
<dbReference type="PROSITE" id="PS00188">
    <property type="entry name" value="BIOTIN"/>
    <property type="match status" value="1"/>
</dbReference>
<dbReference type="PROSITE" id="PS50968">
    <property type="entry name" value="BIOTINYL_LIPOYL"/>
    <property type="match status" value="1"/>
</dbReference>
<dbReference type="PROSITE" id="PS50989">
    <property type="entry name" value="COA_CT_CTER"/>
    <property type="match status" value="1"/>
</dbReference>
<dbReference type="PROSITE" id="PS50980">
    <property type="entry name" value="COA_CT_NTER"/>
    <property type="match status" value="1"/>
</dbReference>
<dbReference type="PROSITE" id="PS00866">
    <property type="entry name" value="CPSASE_1"/>
    <property type="match status" value="1"/>
</dbReference>
<dbReference type="PROSITE" id="PS00867">
    <property type="entry name" value="CPSASE_2"/>
    <property type="match status" value="1"/>
</dbReference>